<organism>
    <name type="scientific">Bacillus subtilis (strain 168)</name>
    <dbReference type="NCBI Taxonomy" id="224308"/>
    <lineage>
        <taxon>Bacteria</taxon>
        <taxon>Bacillati</taxon>
        <taxon>Bacillota</taxon>
        <taxon>Bacilli</taxon>
        <taxon>Bacillales</taxon>
        <taxon>Bacillaceae</taxon>
        <taxon>Bacillus</taxon>
    </lineage>
</organism>
<dbReference type="EMBL" id="Z94043">
    <property type="protein sequence ID" value="CAB08004.1"/>
    <property type="molecule type" value="Genomic_DNA"/>
</dbReference>
<dbReference type="EMBL" id="AL009126">
    <property type="protein sequence ID" value="CAB15422.1"/>
    <property type="molecule type" value="Genomic_DNA"/>
</dbReference>
<dbReference type="PIR" id="C69649">
    <property type="entry name" value="C69649"/>
</dbReference>
<dbReference type="RefSeq" id="NP_391297.1">
    <property type="nucleotide sequence ID" value="NC_000964.3"/>
</dbReference>
<dbReference type="RefSeq" id="WP_003244199.1">
    <property type="nucleotide sequence ID" value="NZ_OZ025638.1"/>
</dbReference>
<dbReference type="SMR" id="O07008"/>
<dbReference type="FunCoup" id="O07008">
    <property type="interactions" value="60"/>
</dbReference>
<dbReference type="STRING" id="224308.BSU34170"/>
<dbReference type="PaxDb" id="224308-BSU34170"/>
<dbReference type="EnsemblBacteria" id="CAB15422">
    <property type="protein sequence ID" value="CAB15422"/>
    <property type="gene ID" value="BSU_34170"/>
</dbReference>
<dbReference type="GeneID" id="936331"/>
<dbReference type="KEGG" id="bsu:BSU34170"/>
<dbReference type="PATRIC" id="fig|224308.179.peg.3704"/>
<dbReference type="eggNOG" id="COG1609">
    <property type="taxonomic scope" value="Bacteria"/>
</dbReference>
<dbReference type="InParanoid" id="O07008"/>
<dbReference type="OrthoDB" id="43195at2"/>
<dbReference type="PhylomeDB" id="O07008"/>
<dbReference type="BioCyc" id="BSUB:BSU34170-MONOMER"/>
<dbReference type="Proteomes" id="UP000001570">
    <property type="component" value="Chromosome"/>
</dbReference>
<dbReference type="GO" id="GO:0003700">
    <property type="term" value="F:DNA-binding transcription factor activity"/>
    <property type="evidence" value="ECO:0000318"/>
    <property type="project" value="GO_Central"/>
</dbReference>
<dbReference type="GO" id="GO:0000976">
    <property type="term" value="F:transcription cis-regulatory region binding"/>
    <property type="evidence" value="ECO:0000318"/>
    <property type="project" value="GO_Central"/>
</dbReference>
<dbReference type="GO" id="GO:0006355">
    <property type="term" value="P:regulation of DNA-templated transcription"/>
    <property type="evidence" value="ECO:0000318"/>
    <property type="project" value="GO_Central"/>
</dbReference>
<dbReference type="CDD" id="cd01392">
    <property type="entry name" value="HTH_LacI"/>
    <property type="match status" value="1"/>
</dbReference>
<dbReference type="CDD" id="cd01544">
    <property type="entry name" value="PBP1_GalR"/>
    <property type="match status" value="1"/>
</dbReference>
<dbReference type="Gene3D" id="3.40.50.2300">
    <property type="match status" value="2"/>
</dbReference>
<dbReference type="Gene3D" id="1.10.260.40">
    <property type="entry name" value="lambda repressor-like DNA-binding domains"/>
    <property type="match status" value="1"/>
</dbReference>
<dbReference type="InterPro" id="IPR000843">
    <property type="entry name" value="HTH_LacI"/>
</dbReference>
<dbReference type="InterPro" id="IPR046335">
    <property type="entry name" value="LacI/GalR-like_sensor"/>
</dbReference>
<dbReference type="InterPro" id="IPR010982">
    <property type="entry name" value="Lambda_DNA-bd_dom_sf"/>
</dbReference>
<dbReference type="InterPro" id="IPR028082">
    <property type="entry name" value="Peripla_BP_I"/>
</dbReference>
<dbReference type="PANTHER" id="PTHR30146:SF149">
    <property type="entry name" value="HTH-TYPE TRANSCRIPTIONAL REGULATOR EBGR"/>
    <property type="match status" value="1"/>
</dbReference>
<dbReference type="PANTHER" id="PTHR30146">
    <property type="entry name" value="LACI-RELATED TRANSCRIPTIONAL REPRESSOR"/>
    <property type="match status" value="1"/>
</dbReference>
<dbReference type="Pfam" id="PF00356">
    <property type="entry name" value="LacI"/>
    <property type="match status" value="1"/>
</dbReference>
<dbReference type="Pfam" id="PF13377">
    <property type="entry name" value="Peripla_BP_3"/>
    <property type="match status" value="1"/>
</dbReference>
<dbReference type="SMART" id="SM00354">
    <property type="entry name" value="HTH_LACI"/>
    <property type="match status" value="1"/>
</dbReference>
<dbReference type="SUPFAM" id="SSF47413">
    <property type="entry name" value="lambda repressor-like DNA-binding domains"/>
    <property type="match status" value="1"/>
</dbReference>
<dbReference type="SUPFAM" id="SSF53822">
    <property type="entry name" value="Periplasmic binding protein-like I"/>
    <property type="match status" value="1"/>
</dbReference>
<dbReference type="PROSITE" id="PS50932">
    <property type="entry name" value="HTH_LACI_2"/>
    <property type="match status" value="1"/>
</dbReference>
<evidence type="ECO:0000255" key="1">
    <source>
        <dbReference type="PROSITE-ProRule" id="PRU00111"/>
    </source>
</evidence>
<evidence type="ECO:0000269" key="2">
    <source>
    </source>
</evidence>
<evidence type="ECO:0000269" key="3">
    <source>
    </source>
</evidence>
<evidence type="ECO:0000269" key="4">
    <source>
    </source>
</evidence>
<evidence type="ECO:0000303" key="5">
    <source>
    </source>
</evidence>
<evidence type="ECO:0000303" key="6">
    <source>
    </source>
</evidence>
<evidence type="ECO:0000305" key="7"/>
<feature type="chain" id="PRO_0000381931" description="HTH-type transcriptional regulator GanR">
    <location>
        <begin position="1"/>
        <end position="330"/>
    </location>
</feature>
<feature type="domain" description="HTH lacI-type" evidence="1">
    <location>
        <begin position="2"/>
        <end position="57"/>
    </location>
</feature>
<feature type="DNA-binding region" description="H-T-H motif" evidence="1">
    <location>
        <begin position="4"/>
        <end position="23"/>
    </location>
</feature>
<comment type="function">
    <text evidence="2 3 4">Negatively regulates the expression of the ganSPQAB operon (PubMed:2104611, PubMed:27501980, PubMed:9287030). Inhibits transcription of the operon by binding to an operator in the promoter region (PubMed:27501980). In the presence of galactobiose, GanR dissociates from the promoter, resulting in the expression of the gan operon (PubMed:27501980).</text>
</comment>
<accession>O07008</accession>
<accession>Q795J6</accession>
<proteinExistence type="evidence at protein level"/>
<sequence length="330" mass="37462">MATIKDIAQEAGFSISTVSRVLNNDESLSVPDETREKIYEAAEKLNYRKKTVRPLVKHIAFLYWLTDKEELEDVYFKTMRLEVEKLAKAFNVDMTTYKIADGIESIPEHTEGFIAVGTFSDEELAFLRNLTENGVFIDSTPDPDHFDSVRPDLAQMTRKTVNILTEKGHKSIGFIGGTYKNPNTNQDEMDIREQTFRSYMREKAMLDERYIFCHRGFSVENGYRLMSAAIDTLGDQLPTAFMIAADPIAVGCLQALNEKGIAIPNRVSIVSINNISFAKYVSPPLTTFHIDIHELCKNAVQLLLEQVQDKRRTVKTLYVGAELIVRKSMN</sequence>
<reference key="1">
    <citation type="journal article" date="1997" name="J. Bacteriol.">
        <title>Isolation and characterization of the lacA gene encoding beta-galactosidase in Bacillus subtilis and a regulator gene, lacR.</title>
        <authorList>
            <person name="Daniel R.A."/>
            <person name="Haiech J."/>
            <person name="Denizot F."/>
            <person name="Errington J."/>
        </authorList>
    </citation>
    <scope>NUCLEOTIDE SEQUENCE [GENOMIC DNA]</scope>
    <scope>FUNCTION</scope>
</reference>
<reference key="2">
    <citation type="submission" date="1997-04" db="EMBL/GenBank/DDBJ databases">
        <authorList>
            <person name="Denizot F."/>
        </authorList>
    </citation>
    <scope>NUCLEOTIDE SEQUENCE [GENOMIC DNA]</scope>
    <source>
        <strain>168</strain>
    </source>
</reference>
<reference key="3">
    <citation type="journal article" date="1997" name="Nature">
        <title>The complete genome sequence of the Gram-positive bacterium Bacillus subtilis.</title>
        <authorList>
            <person name="Kunst F."/>
            <person name="Ogasawara N."/>
            <person name="Moszer I."/>
            <person name="Albertini A.M."/>
            <person name="Alloni G."/>
            <person name="Azevedo V."/>
            <person name="Bertero M.G."/>
            <person name="Bessieres P."/>
            <person name="Bolotin A."/>
            <person name="Borchert S."/>
            <person name="Borriss R."/>
            <person name="Boursier L."/>
            <person name="Brans A."/>
            <person name="Braun M."/>
            <person name="Brignell S.C."/>
            <person name="Bron S."/>
            <person name="Brouillet S."/>
            <person name="Bruschi C.V."/>
            <person name="Caldwell B."/>
            <person name="Capuano V."/>
            <person name="Carter N.M."/>
            <person name="Choi S.-K."/>
            <person name="Codani J.-J."/>
            <person name="Connerton I.F."/>
            <person name="Cummings N.J."/>
            <person name="Daniel R.A."/>
            <person name="Denizot F."/>
            <person name="Devine K.M."/>
            <person name="Duesterhoeft A."/>
            <person name="Ehrlich S.D."/>
            <person name="Emmerson P.T."/>
            <person name="Entian K.-D."/>
            <person name="Errington J."/>
            <person name="Fabret C."/>
            <person name="Ferrari E."/>
            <person name="Foulger D."/>
            <person name="Fritz C."/>
            <person name="Fujita M."/>
            <person name="Fujita Y."/>
            <person name="Fuma S."/>
            <person name="Galizzi A."/>
            <person name="Galleron N."/>
            <person name="Ghim S.-Y."/>
            <person name="Glaser P."/>
            <person name="Goffeau A."/>
            <person name="Golightly E.J."/>
            <person name="Grandi G."/>
            <person name="Guiseppi G."/>
            <person name="Guy B.J."/>
            <person name="Haga K."/>
            <person name="Haiech J."/>
            <person name="Harwood C.R."/>
            <person name="Henaut A."/>
            <person name="Hilbert H."/>
            <person name="Holsappel S."/>
            <person name="Hosono S."/>
            <person name="Hullo M.-F."/>
            <person name="Itaya M."/>
            <person name="Jones L.-M."/>
            <person name="Joris B."/>
            <person name="Karamata D."/>
            <person name="Kasahara Y."/>
            <person name="Klaerr-Blanchard M."/>
            <person name="Klein C."/>
            <person name="Kobayashi Y."/>
            <person name="Koetter P."/>
            <person name="Koningstein G."/>
            <person name="Krogh S."/>
            <person name="Kumano M."/>
            <person name="Kurita K."/>
            <person name="Lapidus A."/>
            <person name="Lardinois S."/>
            <person name="Lauber J."/>
            <person name="Lazarevic V."/>
            <person name="Lee S.-M."/>
            <person name="Levine A."/>
            <person name="Liu H."/>
            <person name="Masuda S."/>
            <person name="Mauel C."/>
            <person name="Medigue C."/>
            <person name="Medina N."/>
            <person name="Mellado R.P."/>
            <person name="Mizuno M."/>
            <person name="Moestl D."/>
            <person name="Nakai S."/>
            <person name="Noback M."/>
            <person name="Noone D."/>
            <person name="O'Reilly M."/>
            <person name="Ogawa K."/>
            <person name="Ogiwara A."/>
            <person name="Oudega B."/>
            <person name="Park S.-H."/>
            <person name="Parro V."/>
            <person name="Pohl T.M."/>
            <person name="Portetelle D."/>
            <person name="Porwollik S."/>
            <person name="Prescott A.M."/>
            <person name="Presecan E."/>
            <person name="Pujic P."/>
            <person name="Purnelle B."/>
            <person name="Rapoport G."/>
            <person name="Rey M."/>
            <person name="Reynolds S."/>
            <person name="Rieger M."/>
            <person name="Rivolta C."/>
            <person name="Rocha E."/>
            <person name="Roche B."/>
            <person name="Rose M."/>
            <person name="Sadaie Y."/>
            <person name="Sato T."/>
            <person name="Scanlan E."/>
            <person name="Schleich S."/>
            <person name="Schroeter R."/>
            <person name="Scoffone F."/>
            <person name="Sekiguchi J."/>
            <person name="Sekowska A."/>
            <person name="Seror S.J."/>
            <person name="Serror P."/>
            <person name="Shin B.-S."/>
            <person name="Soldo B."/>
            <person name="Sorokin A."/>
            <person name="Tacconi E."/>
            <person name="Takagi T."/>
            <person name="Takahashi H."/>
            <person name="Takemaru K."/>
            <person name="Takeuchi M."/>
            <person name="Tamakoshi A."/>
            <person name="Tanaka T."/>
            <person name="Terpstra P."/>
            <person name="Tognoni A."/>
            <person name="Tosato V."/>
            <person name="Uchiyama S."/>
            <person name="Vandenbol M."/>
            <person name="Vannier F."/>
            <person name="Vassarotti A."/>
            <person name="Viari A."/>
            <person name="Wambutt R."/>
            <person name="Wedler E."/>
            <person name="Wedler H."/>
            <person name="Weitzenegger T."/>
            <person name="Winters P."/>
            <person name="Wipat A."/>
            <person name="Yamamoto H."/>
            <person name="Yamane K."/>
            <person name="Yasumoto K."/>
            <person name="Yata K."/>
            <person name="Yoshida K."/>
            <person name="Yoshikawa H.-F."/>
            <person name="Zumstein E."/>
            <person name="Yoshikawa H."/>
            <person name="Danchin A."/>
        </authorList>
    </citation>
    <scope>NUCLEOTIDE SEQUENCE [LARGE SCALE GENOMIC DNA]</scope>
    <source>
        <strain>168</strain>
    </source>
</reference>
<reference key="4">
    <citation type="journal article" date="1990" name="J. Bacteriol.">
        <title>Isolation and characterization of mutations in the gene encoding an endogenous Bacillus subtilis beta-galactosidase and its regulator.</title>
        <authorList>
            <person name="Errington J."/>
            <person name="Vogt C.H."/>
        </authorList>
    </citation>
    <scope>FUNCTION</scope>
    <source>
        <strain>168</strain>
    </source>
</reference>
<reference key="5">
    <citation type="journal article" date="2016" name="J. Bacteriol.">
        <title>Role of the ganSPQAB operon in degradation of galactan by Bacillus subtilis.</title>
        <authorList>
            <person name="Watzlawick H."/>
            <person name="Morabbi Heravi K."/>
            <person name="Altenbuchner J."/>
        </authorList>
    </citation>
    <scope>FUNCTION</scope>
    <scope>DNA-BINDING</scope>
</reference>
<keyword id="KW-0238">DNA-binding</keyword>
<keyword id="KW-1185">Reference proteome</keyword>
<keyword id="KW-0678">Repressor</keyword>
<keyword id="KW-0804">Transcription</keyword>
<keyword id="KW-0805">Transcription regulation</keyword>
<gene>
    <name evidence="6" type="primary">ganR</name>
    <name evidence="5" type="synonym">lacR</name>
    <name type="synonym">yvfJ</name>
    <name type="ordered locus">BSU34170</name>
</gene>
<name>GANR_BACSU</name>
<protein>
    <recommendedName>
        <fullName evidence="7">HTH-type transcriptional regulator GanR</fullName>
    </recommendedName>
</protein>